<accession>B4U503</accession>
<keyword id="KW-0687">Ribonucleoprotein</keyword>
<keyword id="KW-0689">Ribosomal protein</keyword>
<keyword id="KW-0694">RNA-binding</keyword>
<keyword id="KW-0699">rRNA-binding</keyword>
<name>RL2_STREM</name>
<proteinExistence type="inferred from homology"/>
<gene>
    <name evidence="1" type="primary">rplB</name>
    <name type="ordered locus">Sez_0059</name>
</gene>
<organism>
    <name type="scientific">Streptococcus equi subsp. zooepidemicus (strain MGCS10565)</name>
    <dbReference type="NCBI Taxonomy" id="552526"/>
    <lineage>
        <taxon>Bacteria</taxon>
        <taxon>Bacillati</taxon>
        <taxon>Bacillota</taxon>
        <taxon>Bacilli</taxon>
        <taxon>Lactobacillales</taxon>
        <taxon>Streptococcaceae</taxon>
        <taxon>Streptococcus</taxon>
    </lineage>
</organism>
<comment type="function">
    <text evidence="1">One of the primary rRNA binding proteins. Required for association of the 30S and 50S subunits to form the 70S ribosome, for tRNA binding and peptide bond formation. It has been suggested to have peptidyltransferase activity; this is somewhat controversial. Makes several contacts with the 16S rRNA in the 70S ribosome.</text>
</comment>
<comment type="subunit">
    <text evidence="1">Part of the 50S ribosomal subunit. Forms a bridge to the 30S subunit in the 70S ribosome.</text>
</comment>
<comment type="similarity">
    <text evidence="1">Belongs to the universal ribosomal protein uL2 family.</text>
</comment>
<dbReference type="EMBL" id="CP001129">
    <property type="protein sequence ID" value="ACG61442.1"/>
    <property type="molecule type" value="Genomic_DNA"/>
</dbReference>
<dbReference type="RefSeq" id="WP_012514735.1">
    <property type="nucleotide sequence ID" value="NC_011134.1"/>
</dbReference>
<dbReference type="SMR" id="B4U503"/>
<dbReference type="KEGG" id="sez:Sez_0059"/>
<dbReference type="HOGENOM" id="CLU_036235_2_1_9"/>
<dbReference type="Proteomes" id="UP000001873">
    <property type="component" value="Chromosome"/>
</dbReference>
<dbReference type="GO" id="GO:0015934">
    <property type="term" value="C:large ribosomal subunit"/>
    <property type="evidence" value="ECO:0007669"/>
    <property type="project" value="InterPro"/>
</dbReference>
<dbReference type="GO" id="GO:0019843">
    <property type="term" value="F:rRNA binding"/>
    <property type="evidence" value="ECO:0007669"/>
    <property type="project" value="UniProtKB-UniRule"/>
</dbReference>
<dbReference type="GO" id="GO:0003735">
    <property type="term" value="F:structural constituent of ribosome"/>
    <property type="evidence" value="ECO:0007669"/>
    <property type="project" value="InterPro"/>
</dbReference>
<dbReference type="GO" id="GO:0016740">
    <property type="term" value="F:transferase activity"/>
    <property type="evidence" value="ECO:0007669"/>
    <property type="project" value="InterPro"/>
</dbReference>
<dbReference type="GO" id="GO:0002181">
    <property type="term" value="P:cytoplasmic translation"/>
    <property type="evidence" value="ECO:0007669"/>
    <property type="project" value="TreeGrafter"/>
</dbReference>
<dbReference type="FunFam" id="2.30.30.30:FF:000001">
    <property type="entry name" value="50S ribosomal protein L2"/>
    <property type="match status" value="1"/>
</dbReference>
<dbReference type="FunFam" id="2.40.50.140:FF:000003">
    <property type="entry name" value="50S ribosomal protein L2"/>
    <property type="match status" value="1"/>
</dbReference>
<dbReference type="FunFam" id="4.10.950.10:FF:000001">
    <property type="entry name" value="50S ribosomal protein L2"/>
    <property type="match status" value="1"/>
</dbReference>
<dbReference type="Gene3D" id="2.30.30.30">
    <property type="match status" value="1"/>
</dbReference>
<dbReference type="Gene3D" id="2.40.50.140">
    <property type="entry name" value="Nucleic acid-binding proteins"/>
    <property type="match status" value="1"/>
</dbReference>
<dbReference type="Gene3D" id="4.10.950.10">
    <property type="entry name" value="Ribosomal protein L2, domain 3"/>
    <property type="match status" value="1"/>
</dbReference>
<dbReference type="HAMAP" id="MF_01320_B">
    <property type="entry name" value="Ribosomal_uL2_B"/>
    <property type="match status" value="1"/>
</dbReference>
<dbReference type="InterPro" id="IPR012340">
    <property type="entry name" value="NA-bd_OB-fold"/>
</dbReference>
<dbReference type="InterPro" id="IPR014722">
    <property type="entry name" value="Rib_uL2_dom2"/>
</dbReference>
<dbReference type="InterPro" id="IPR002171">
    <property type="entry name" value="Ribosomal_uL2"/>
</dbReference>
<dbReference type="InterPro" id="IPR005880">
    <property type="entry name" value="Ribosomal_uL2_bac/org-type"/>
</dbReference>
<dbReference type="InterPro" id="IPR022669">
    <property type="entry name" value="Ribosomal_uL2_C"/>
</dbReference>
<dbReference type="InterPro" id="IPR022671">
    <property type="entry name" value="Ribosomal_uL2_CS"/>
</dbReference>
<dbReference type="InterPro" id="IPR014726">
    <property type="entry name" value="Ribosomal_uL2_dom3"/>
</dbReference>
<dbReference type="InterPro" id="IPR022666">
    <property type="entry name" value="Ribosomal_uL2_RNA-bd_dom"/>
</dbReference>
<dbReference type="InterPro" id="IPR008991">
    <property type="entry name" value="Translation_prot_SH3-like_sf"/>
</dbReference>
<dbReference type="NCBIfam" id="TIGR01171">
    <property type="entry name" value="rplB_bact"/>
    <property type="match status" value="1"/>
</dbReference>
<dbReference type="PANTHER" id="PTHR13691:SF5">
    <property type="entry name" value="LARGE RIBOSOMAL SUBUNIT PROTEIN UL2M"/>
    <property type="match status" value="1"/>
</dbReference>
<dbReference type="PANTHER" id="PTHR13691">
    <property type="entry name" value="RIBOSOMAL PROTEIN L2"/>
    <property type="match status" value="1"/>
</dbReference>
<dbReference type="Pfam" id="PF00181">
    <property type="entry name" value="Ribosomal_L2"/>
    <property type="match status" value="1"/>
</dbReference>
<dbReference type="Pfam" id="PF03947">
    <property type="entry name" value="Ribosomal_L2_C"/>
    <property type="match status" value="1"/>
</dbReference>
<dbReference type="PIRSF" id="PIRSF002158">
    <property type="entry name" value="Ribosomal_L2"/>
    <property type="match status" value="1"/>
</dbReference>
<dbReference type="SMART" id="SM01383">
    <property type="entry name" value="Ribosomal_L2"/>
    <property type="match status" value="1"/>
</dbReference>
<dbReference type="SMART" id="SM01382">
    <property type="entry name" value="Ribosomal_L2_C"/>
    <property type="match status" value="1"/>
</dbReference>
<dbReference type="SUPFAM" id="SSF50249">
    <property type="entry name" value="Nucleic acid-binding proteins"/>
    <property type="match status" value="1"/>
</dbReference>
<dbReference type="SUPFAM" id="SSF50104">
    <property type="entry name" value="Translation proteins SH3-like domain"/>
    <property type="match status" value="1"/>
</dbReference>
<dbReference type="PROSITE" id="PS00467">
    <property type="entry name" value="RIBOSOMAL_L2"/>
    <property type="match status" value="1"/>
</dbReference>
<reference key="1">
    <citation type="journal article" date="2008" name="PLoS ONE">
        <title>Genome sequence of a lancefield group C Streptococcus zooepidemicus strain causing epidemic nephritis: new information about an old disease.</title>
        <authorList>
            <person name="Beres S.B."/>
            <person name="Sesso R."/>
            <person name="Pinto S.W.L."/>
            <person name="Hoe N.P."/>
            <person name="Porcella S.F."/>
            <person name="Deleo F.R."/>
            <person name="Musser J.M."/>
        </authorList>
    </citation>
    <scope>NUCLEOTIDE SEQUENCE [LARGE SCALE GENOMIC DNA]</scope>
    <source>
        <strain>MGCS10565</strain>
    </source>
</reference>
<feature type="chain" id="PRO_1000141617" description="Large ribosomal subunit protein uL2">
    <location>
        <begin position="1"/>
        <end position="277"/>
    </location>
</feature>
<feature type="region of interest" description="Disordered" evidence="2">
    <location>
        <begin position="219"/>
        <end position="277"/>
    </location>
</feature>
<feature type="compositionally biased region" description="Basic residues" evidence="2">
    <location>
        <begin position="259"/>
        <end position="277"/>
    </location>
</feature>
<sequence>MGIKVYKPTTNGRRNMTSLDFAEITTSTPEKSLLVSLKNKAGRNNNGRITVRHQGGGHKRHYRLIDFKRNKDGVEAVVKTIEYDPNRTANIALVHYTDGVKAYIIAPKGLEVGQRIVSGPDADIKIGNALPLANIPVGTVVHNIELKPGKGGELVRAAGASAQVLGQEGKYVLVRLQSGEVRMILGTCRATVGTVGNEQQSLVNIGKAGRSRWKGIRPTVRGSVMNPNDHPHGGGEGKAPVGRKAPSTPWGKPALGLKTRNKKAKSNKLIVRRRNEK</sequence>
<protein>
    <recommendedName>
        <fullName evidence="1">Large ribosomal subunit protein uL2</fullName>
    </recommendedName>
    <alternativeName>
        <fullName evidence="3">50S ribosomal protein L2</fullName>
    </alternativeName>
</protein>
<evidence type="ECO:0000255" key="1">
    <source>
        <dbReference type="HAMAP-Rule" id="MF_01320"/>
    </source>
</evidence>
<evidence type="ECO:0000256" key="2">
    <source>
        <dbReference type="SAM" id="MobiDB-lite"/>
    </source>
</evidence>
<evidence type="ECO:0000305" key="3"/>